<reference key="1">
    <citation type="journal article" date="2005" name="Nucleic Acids Res.">
        <title>Genome dynamics and diversity of Shigella species, the etiologic agents of bacillary dysentery.</title>
        <authorList>
            <person name="Yang F."/>
            <person name="Yang J."/>
            <person name="Zhang X."/>
            <person name="Chen L."/>
            <person name="Jiang Y."/>
            <person name="Yan Y."/>
            <person name="Tang X."/>
            <person name="Wang J."/>
            <person name="Xiong Z."/>
            <person name="Dong J."/>
            <person name="Xue Y."/>
            <person name="Zhu Y."/>
            <person name="Xu X."/>
            <person name="Sun L."/>
            <person name="Chen S."/>
            <person name="Nie H."/>
            <person name="Peng J."/>
            <person name="Xu J."/>
            <person name="Wang Y."/>
            <person name="Yuan Z."/>
            <person name="Wen Y."/>
            <person name="Yao Z."/>
            <person name="Shen Y."/>
            <person name="Qiang B."/>
            <person name="Hou Y."/>
            <person name="Yu J."/>
            <person name="Jin Q."/>
        </authorList>
    </citation>
    <scope>NUCLEOTIDE SEQUENCE [LARGE SCALE GENOMIC DNA]</scope>
    <source>
        <strain>Sd197</strain>
    </source>
</reference>
<sequence>MLPSQSPAIFTVSRLNQTVRLLLEHEMGQVWISGEISNFTQPASGHWYFTLKDDTAQVRCAMFRNSNRRVTFRPQHGQQVLVRANITLYEPRGDYQIIVESMQPAGEGLLQQKYEQLKAKLQAEGLFDLQYKKPLPSPAHCVGVITSKTGAALHDILHVLKRRDPSLPVIIYPTAVQGDDAPGQIVRAIELANQRNECDVLIVGRGGGSLEDLWSFNDERVAQAIFASRIPVVSAVGHETDVTIADFVADLRAPTPSAAAEVVSRNQQELLRQVQSTRQRLEMAMDYYLANRTRRFTQIHHRLQQQHPQLRLARQQTMLERLQKRMSFALENQLKRAGQQQQRLTQRLNQQNPQPKIHRAQTRIQQLEYRLAETLRAQLSATRERFGNAVTHLEAVSPLSTLARGYSVTTATDGKVLKKVKQVKAGEMLTTRLEDGWVESEVKNIQPIKKSRKKVH</sequence>
<keyword id="KW-0963">Cytoplasm</keyword>
<keyword id="KW-0269">Exonuclease</keyword>
<keyword id="KW-0378">Hydrolase</keyword>
<keyword id="KW-0540">Nuclease</keyword>
<keyword id="KW-1185">Reference proteome</keyword>
<protein>
    <recommendedName>
        <fullName evidence="1">Exodeoxyribonuclease 7 large subunit</fullName>
        <ecNumber evidence="1">3.1.11.6</ecNumber>
    </recommendedName>
    <alternativeName>
        <fullName evidence="1">Exodeoxyribonuclease VII large subunit</fullName>
        <shortName evidence="1">Exonuclease VII large subunit</shortName>
    </alternativeName>
</protein>
<evidence type="ECO:0000255" key="1">
    <source>
        <dbReference type="HAMAP-Rule" id="MF_00378"/>
    </source>
</evidence>
<feature type="chain" id="PRO_0000273689" description="Exodeoxyribonuclease 7 large subunit">
    <location>
        <begin position="1"/>
        <end position="456"/>
    </location>
</feature>
<organism>
    <name type="scientific">Shigella dysenteriae serotype 1 (strain Sd197)</name>
    <dbReference type="NCBI Taxonomy" id="300267"/>
    <lineage>
        <taxon>Bacteria</taxon>
        <taxon>Pseudomonadati</taxon>
        <taxon>Pseudomonadota</taxon>
        <taxon>Gammaproteobacteria</taxon>
        <taxon>Enterobacterales</taxon>
        <taxon>Enterobacteriaceae</taxon>
        <taxon>Shigella</taxon>
    </lineage>
</organism>
<gene>
    <name evidence="1" type="primary">xseA</name>
    <name type="ordered locus">SDY_2705</name>
</gene>
<dbReference type="EC" id="3.1.11.6" evidence="1"/>
<dbReference type="EMBL" id="CP000034">
    <property type="protein sequence ID" value="ABB62752.1"/>
    <property type="molecule type" value="Genomic_DNA"/>
</dbReference>
<dbReference type="RefSeq" id="WP_000937889.1">
    <property type="nucleotide sequence ID" value="NC_007606.1"/>
</dbReference>
<dbReference type="RefSeq" id="YP_404243.1">
    <property type="nucleotide sequence ID" value="NC_007606.1"/>
</dbReference>
<dbReference type="SMR" id="Q32D53"/>
<dbReference type="STRING" id="300267.SDY_2705"/>
<dbReference type="EnsemblBacteria" id="ABB62752">
    <property type="protein sequence ID" value="ABB62752"/>
    <property type="gene ID" value="SDY_2705"/>
</dbReference>
<dbReference type="KEGG" id="sdy:SDY_2705"/>
<dbReference type="PATRIC" id="fig|300267.13.peg.3263"/>
<dbReference type="HOGENOM" id="CLU_023625_3_1_6"/>
<dbReference type="Proteomes" id="UP000002716">
    <property type="component" value="Chromosome"/>
</dbReference>
<dbReference type="GO" id="GO:0005737">
    <property type="term" value="C:cytoplasm"/>
    <property type="evidence" value="ECO:0007669"/>
    <property type="project" value="UniProtKB-SubCell"/>
</dbReference>
<dbReference type="GO" id="GO:0009318">
    <property type="term" value="C:exodeoxyribonuclease VII complex"/>
    <property type="evidence" value="ECO:0007669"/>
    <property type="project" value="InterPro"/>
</dbReference>
<dbReference type="GO" id="GO:0008855">
    <property type="term" value="F:exodeoxyribonuclease VII activity"/>
    <property type="evidence" value="ECO:0007669"/>
    <property type="project" value="UniProtKB-UniRule"/>
</dbReference>
<dbReference type="GO" id="GO:0003676">
    <property type="term" value="F:nucleic acid binding"/>
    <property type="evidence" value="ECO:0007669"/>
    <property type="project" value="InterPro"/>
</dbReference>
<dbReference type="GO" id="GO:0006308">
    <property type="term" value="P:DNA catabolic process"/>
    <property type="evidence" value="ECO:0007669"/>
    <property type="project" value="UniProtKB-UniRule"/>
</dbReference>
<dbReference type="CDD" id="cd04489">
    <property type="entry name" value="ExoVII_LU_OBF"/>
    <property type="match status" value="1"/>
</dbReference>
<dbReference type="HAMAP" id="MF_00378">
    <property type="entry name" value="Exonuc_7_L"/>
    <property type="match status" value="1"/>
</dbReference>
<dbReference type="InterPro" id="IPR003753">
    <property type="entry name" value="Exonuc_VII_L"/>
</dbReference>
<dbReference type="InterPro" id="IPR020579">
    <property type="entry name" value="Exonuc_VII_lsu_C"/>
</dbReference>
<dbReference type="InterPro" id="IPR025824">
    <property type="entry name" value="OB-fold_nuc-bd_dom"/>
</dbReference>
<dbReference type="NCBIfam" id="TIGR00237">
    <property type="entry name" value="xseA"/>
    <property type="match status" value="1"/>
</dbReference>
<dbReference type="PANTHER" id="PTHR30008">
    <property type="entry name" value="EXODEOXYRIBONUCLEASE 7 LARGE SUBUNIT"/>
    <property type="match status" value="1"/>
</dbReference>
<dbReference type="PANTHER" id="PTHR30008:SF0">
    <property type="entry name" value="EXODEOXYRIBONUCLEASE 7 LARGE SUBUNIT"/>
    <property type="match status" value="1"/>
</dbReference>
<dbReference type="Pfam" id="PF02601">
    <property type="entry name" value="Exonuc_VII_L"/>
    <property type="match status" value="1"/>
</dbReference>
<dbReference type="Pfam" id="PF13742">
    <property type="entry name" value="tRNA_anti_2"/>
    <property type="match status" value="1"/>
</dbReference>
<name>EX7L_SHIDS</name>
<accession>Q32D53</accession>
<proteinExistence type="inferred from homology"/>
<comment type="function">
    <text evidence="1">Bidirectionally degrades single-stranded DNA into large acid-insoluble oligonucleotides, which are then degraded further into small acid-soluble oligonucleotides.</text>
</comment>
<comment type="catalytic activity">
    <reaction evidence="1">
        <text>Exonucleolytic cleavage in either 5'- to 3'- or 3'- to 5'-direction to yield nucleoside 5'-phosphates.</text>
        <dbReference type="EC" id="3.1.11.6"/>
    </reaction>
</comment>
<comment type="subunit">
    <text evidence="1">Heterooligomer composed of large and small subunits.</text>
</comment>
<comment type="subcellular location">
    <subcellularLocation>
        <location evidence="1">Cytoplasm</location>
    </subcellularLocation>
</comment>
<comment type="similarity">
    <text evidence="1">Belongs to the XseA family.</text>
</comment>